<proteinExistence type="inferred from homology"/>
<comment type="function">
    <text evidence="1">Catalyzes the conversion of 4-hydroxy-tetrahydrodipicolinate (HTPA) to tetrahydrodipicolinate.</text>
</comment>
<comment type="catalytic activity">
    <reaction evidence="1">
        <text>(S)-2,3,4,5-tetrahydrodipicolinate + NAD(+) + H2O = (2S,4S)-4-hydroxy-2,3,4,5-tetrahydrodipicolinate + NADH + H(+)</text>
        <dbReference type="Rhea" id="RHEA:35323"/>
        <dbReference type="ChEBI" id="CHEBI:15377"/>
        <dbReference type="ChEBI" id="CHEBI:15378"/>
        <dbReference type="ChEBI" id="CHEBI:16845"/>
        <dbReference type="ChEBI" id="CHEBI:57540"/>
        <dbReference type="ChEBI" id="CHEBI:57945"/>
        <dbReference type="ChEBI" id="CHEBI:67139"/>
        <dbReference type="EC" id="1.17.1.8"/>
    </reaction>
</comment>
<comment type="catalytic activity">
    <reaction evidence="1">
        <text>(S)-2,3,4,5-tetrahydrodipicolinate + NADP(+) + H2O = (2S,4S)-4-hydroxy-2,3,4,5-tetrahydrodipicolinate + NADPH + H(+)</text>
        <dbReference type="Rhea" id="RHEA:35331"/>
        <dbReference type="ChEBI" id="CHEBI:15377"/>
        <dbReference type="ChEBI" id="CHEBI:15378"/>
        <dbReference type="ChEBI" id="CHEBI:16845"/>
        <dbReference type="ChEBI" id="CHEBI:57783"/>
        <dbReference type="ChEBI" id="CHEBI:58349"/>
        <dbReference type="ChEBI" id="CHEBI:67139"/>
        <dbReference type="EC" id="1.17.1.8"/>
    </reaction>
</comment>
<comment type="pathway">
    <text evidence="1">Amino-acid biosynthesis; L-lysine biosynthesis via DAP pathway; (S)-tetrahydrodipicolinate from L-aspartate: step 4/4.</text>
</comment>
<comment type="subcellular location">
    <subcellularLocation>
        <location evidence="1">Cytoplasm</location>
    </subcellularLocation>
</comment>
<comment type="similarity">
    <text evidence="1">Belongs to the DapB family.</text>
</comment>
<comment type="caution">
    <text evidence="2">Was originally thought to be a dihydrodipicolinate reductase (DHDPR), catalyzing the conversion of dihydrodipicolinate to tetrahydrodipicolinate. However, it was shown in E.coli that the substrate of the enzymatic reaction is not dihydrodipicolinate (DHDP) but in fact (2S,4S)-4-hydroxy-2,3,4,5-tetrahydrodipicolinic acid (HTPA), the product released by the DapA-catalyzed reaction.</text>
</comment>
<keyword id="KW-0028">Amino-acid biosynthesis</keyword>
<keyword id="KW-0963">Cytoplasm</keyword>
<keyword id="KW-0220">Diaminopimelate biosynthesis</keyword>
<keyword id="KW-0457">Lysine biosynthesis</keyword>
<keyword id="KW-0520">NAD</keyword>
<keyword id="KW-0521">NADP</keyword>
<keyword id="KW-0560">Oxidoreductase</keyword>
<keyword id="KW-1185">Reference proteome</keyword>
<sequence length="263" mass="28900">MRVAVSGFKGRMGHEVVKTVLREADLELVAVLDHEPKEKNINEMVEFSSLDVPVFGNLSEMLEEIKPDCVVDFTTPKVGYSNTKTILEHGVRAVVGTTGFTPEQISELRTIAESKKIGALIAPNFAVGAVLMMQFAQKAAKYFPNVEIIELHHDNKLDAPSGTGVKTAEMMAETREFVKQGAADEVELIEGARGAEYEGMRIHSVRLPGLVAHQEVIFGAEGQGLTIRHDSYDRISFMSGVALSVRKTKELETLIYGLENILD</sequence>
<name>DAPB_LISMO</name>
<protein>
    <recommendedName>
        <fullName evidence="1">4-hydroxy-tetrahydrodipicolinate reductase</fullName>
        <shortName evidence="1">HTPA reductase</shortName>
        <ecNumber evidence="1">1.17.1.8</ecNumber>
    </recommendedName>
</protein>
<organism>
    <name type="scientific">Listeria monocytogenes serovar 1/2a (strain ATCC BAA-679 / EGD-e)</name>
    <dbReference type="NCBI Taxonomy" id="169963"/>
    <lineage>
        <taxon>Bacteria</taxon>
        <taxon>Bacillati</taxon>
        <taxon>Bacillota</taxon>
        <taxon>Bacilli</taxon>
        <taxon>Bacillales</taxon>
        <taxon>Listeriaceae</taxon>
        <taxon>Listeria</taxon>
    </lineage>
</organism>
<feature type="chain" id="PRO_0000141454" description="4-hydroxy-tetrahydrodipicolinate reductase">
    <location>
        <begin position="1"/>
        <end position="263"/>
    </location>
</feature>
<feature type="active site" description="Proton donor/acceptor" evidence="1">
    <location>
        <position position="152"/>
    </location>
</feature>
<feature type="active site" description="Proton donor" evidence="1">
    <location>
        <position position="156"/>
    </location>
</feature>
<feature type="binding site" evidence="1">
    <location>
        <begin position="7"/>
        <end position="12"/>
    </location>
    <ligand>
        <name>NAD(+)</name>
        <dbReference type="ChEBI" id="CHEBI:57540"/>
    </ligand>
</feature>
<feature type="binding site" evidence="1">
    <location>
        <begin position="96"/>
        <end position="98"/>
    </location>
    <ligand>
        <name>NAD(+)</name>
        <dbReference type="ChEBI" id="CHEBI:57540"/>
    </ligand>
</feature>
<feature type="binding site" evidence="1">
    <location>
        <begin position="122"/>
        <end position="125"/>
    </location>
    <ligand>
        <name>NAD(+)</name>
        <dbReference type="ChEBI" id="CHEBI:57540"/>
    </ligand>
</feature>
<feature type="binding site" evidence="1">
    <location>
        <position position="153"/>
    </location>
    <ligand>
        <name>(S)-2,3,4,5-tetrahydrodipicolinate</name>
        <dbReference type="ChEBI" id="CHEBI:16845"/>
    </ligand>
</feature>
<feature type="binding site" evidence="1">
    <location>
        <begin position="162"/>
        <end position="163"/>
    </location>
    <ligand>
        <name>(S)-2,3,4,5-tetrahydrodipicolinate</name>
        <dbReference type="ChEBI" id="CHEBI:16845"/>
    </ligand>
</feature>
<reference key="1">
    <citation type="journal article" date="2001" name="Science">
        <title>Comparative genomics of Listeria species.</title>
        <authorList>
            <person name="Glaser P."/>
            <person name="Frangeul L."/>
            <person name="Buchrieser C."/>
            <person name="Rusniok C."/>
            <person name="Amend A."/>
            <person name="Baquero F."/>
            <person name="Berche P."/>
            <person name="Bloecker H."/>
            <person name="Brandt P."/>
            <person name="Chakraborty T."/>
            <person name="Charbit A."/>
            <person name="Chetouani F."/>
            <person name="Couve E."/>
            <person name="de Daruvar A."/>
            <person name="Dehoux P."/>
            <person name="Domann E."/>
            <person name="Dominguez-Bernal G."/>
            <person name="Duchaud E."/>
            <person name="Durant L."/>
            <person name="Dussurget O."/>
            <person name="Entian K.-D."/>
            <person name="Fsihi H."/>
            <person name="Garcia-del Portillo F."/>
            <person name="Garrido P."/>
            <person name="Gautier L."/>
            <person name="Goebel W."/>
            <person name="Gomez-Lopez N."/>
            <person name="Hain T."/>
            <person name="Hauf J."/>
            <person name="Jackson D."/>
            <person name="Jones L.-M."/>
            <person name="Kaerst U."/>
            <person name="Kreft J."/>
            <person name="Kuhn M."/>
            <person name="Kunst F."/>
            <person name="Kurapkat G."/>
            <person name="Madueno E."/>
            <person name="Maitournam A."/>
            <person name="Mata Vicente J."/>
            <person name="Ng E."/>
            <person name="Nedjari H."/>
            <person name="Nordsiek G."/>
            <person name="Novella S."/>
            <person name="de Pablos B."/>
            <person name="Perez-Diaz J.-C."/>
            <person name="Purcell R."/>
            <person name="Remmel B."/>
            <person name="Rose M."/>
            <person name="Schlueter T."/>
            <person name="Simoes N."/>
            <person name="Tierrez A."/>
            <person name="Vazquez-Boland J.-A."/>
            <person name="Voss H."/>
            <person name="Wehland J."/>
            <person name="Cossart P."/>
        </authorList>
    </citation>
    <scope>NUCLEOTIDE SEQUENCE [LARGE SCALE GENOMIC DNA]</scope>
    <source>
        <strain>ATCC BAA-679 / EGD-e</strain>
    </source>
</reference>
<evidence type="ECO:0000255" key="1">
    <source>
        <dbReference type="HAMAP-Rule" id="MF_00102"/>
    </source>
</evidence>
<evidence type="ECO:0000305" key="2"/>
<dbReference type="EC" id="1.17.1.8" evidence="1"/>
<dbReference type="EMBL" id="AL591981">
    <property type="protein sequence ID" value="CAC99985.1"/>
    <property type="molecule type" value="Genomic_DNA"/>
</dbReference>
<dbReference type="PIR" id="AC1313">
    <property type="entry name" value="AC1313"/>
</dbReference>
<dbReference type="RefSeq" id="NP_465431.1">
    <property type="nucleotide sequence ID" value="NC_003210.1"/>
</dbReference>
<dbReference type="RefSeq" id="WP_003723017.1">
    <property type="nucleotide sequence ID" value="NZ_CP149495.1"/>
</dbReference>
<dbReference type="SMR" id="Q8Y5Z6"/>
<dbReference type="STRING" id="169963.gene:17594592"/>
<dbReference type="PaxDb" id="169963-lmo1907"/>
<dbReference type="EnsemblBacteria" id="CAC99985">
    <property type="protein sequence ID" value="CAC99985"/>
    <property type="gene ID" value="CAC99985"/>
</dbReference>
<dbReference type="GeneID" id="985778"/>
<dbReference type="KEGG" id="lmo:lmo1907"/>
<dbReference type="PATRIC" id="fig|169963.11.peg.1953"/>
<dbReference type="eggNOG" id="COG0289">
    <property type="taxonomic scope" value="Bacteria"/>
</dbReference>
<dbReference type="HOGENOM" id="CLU_047479_0_1_9"/>
<dbReference type="OrthoDB" id="9790352at2"/>
<dbReference type="PhylomeDB" id="Q8Y5Z6"/>
<dbReference type="BioCyc" id="LMON169963:LMO1907-MONOMER"/>
<dbReference type="UniPathway" id="UPA00034">
    <property type="reaction ID" value="UER00018"/>
</dbReference>
<dbReference type="Proteomes" id="UP000000817">
    <property type="component" value="Chromosome"/>
</dbReference>
<dbReference type="GO" id="GO:0005829">
    <property type="term" value="C:cytosol"/>
    <property type="evidence" value="ECO:0000318"/>
    <property type="project" value="GO_Central"/>
</dbReference>
<dbReference type="GO" id="GO:0008839">
    <property type="term" value="F:4-hydroxy-tetrahydrodipicolinate reductase"/>
    <property type="evidence" value="ECO:0000318"/>
    <property type="project" value="GO_Central"/>
</dbReference>
<dbReference type="GO" id="GO:0051287">
    <property type="term" value="F:NAD binding"/>
    <property type="evidence" value="ECO:0007669"/>
    <property type="project" value="UniProtKB-UniRule"/>
</dbReference>
<dbReference type="GO" id="GO:0050661">
    <property type="term" value="F:NADP binding"/>
    <property type="evidence" value="ECO:0007669"/>
    <property type="project" value="UniProtKB-UniRule"/>
</dbReference>
<dbReference type="GO" id="GO:0016726">
    <property type="term" value="F:oxidoreductase activity, acting on CH or CH2 groups, NAD or NADP as acceptor"/>
    <property type="evidence" value="ECO:0007669"/>
    <property type="project" value="UniProtKB-UniRule"/>
</dbReference>
<dbReference type="GO" id="GO:0019877">
    <property type="term" value="P:diaminopimelate biosynthetic process"/>
    <property type="evidence" value="ECO:0000318"/>
    <property type="project" value="GO_Central"/>
</dbReference>
<dbReference type="GO" id="GO:0009089">
    <property type="term" value="P:lysine biosynthetic process via diaminopimelate"/>
    <property type="evidence" value="ECO:0007669"/>
    <property type="project" value="UniProtKB-UniRule"/>
</dbReference>
<dbReference type="CDD" id="cd02274">
    <property type="entry name" value="DHDPR_N"/>
    <property type="match status" value="1"/>
</dbReference>
<dbReference type="FunFam" id="3.30.360.10:FF:000009">
    <property type="entry name" value="4-hydroxy-tetrahydrodipicolinate reductase"/>
    <property type="match status" value="1"/>
</dbReference>
<dbReference type="Gene3D" id="3.30.360.10">
    <property type="entry name" value="Dihydrodipicolinate Reductase, domain 2"/>
    <property type="match status" value="1"/>
</dbReference>
<dbReference type="Gene3D" id="3.40.50.720">
    <property type="entry name" value="NAD(P)-binding Rossmann-like Domain"/>
    <property type="match status" value="1"/>
</dbReference>
<dbReference type="HAMAP" id="MF_00102">
    <property type="entry name" value="DapB"/>
    <property type="match status" value="1"/>
</dbReference>
<dbReference type="InterPro" id="IPR022663">
    <property type="entry name" value="DapB_C"/>
</dbReference>
<dbReference type="InterPro" id="IPR000846">
    <property type="entry name" value="DapB_N"/>
</dbReference>
<dbReference type="InterPro" id="IPR022664">
    <property type="entry name" value="DapB_N_CS"/>
</dbReference>
<dbReference type="InterPro" id="IPR023940">
    <property type="entry name" value="DHDPR_bac"/>
</dbReference>
<dbReference type="InterPro" id="IPR036291">
    <property type="entry name" value="NAD(P)-bd_dom_sf"/>
</dbReference>
<dbReference type="NCBIfam" id="TIGR00036">
    <property type="entry name" value="dapB"/>
    <property type="match status" value="1"/>
</dbReference>
<dbReference type="PANTHER" id="PTHR20836:SF0">
    <property type="entry name" value="4-HYDROXY-TETRAHYDRODIPICOLINATE REDUCTASE 1, CHLOROPLASTIC-RELATED"/>
    <property type="match status" value="1"/>
</dbReference>
<dbReference type="PANTHER" id="PTHR20836">
    <property type="entry name" value="DIHYDRODIPICOLINATE REDUCTASE"/>
    <property type="match status" value="1"/>
</dbReference>
<dbReference type="Pfam" id="PF05173">
    <property type="entry name" value="DapB_C"/>
    <property type="match status" value="1"/>
</dbReference>
<dbReference type="Pfam" id="PF01113">
    <property type="entry name" value="DapB_N"/>
    <property type="match status" value="1"/>
</dbReference>
<dbReference type="PIRSF" id="PIRSF000161">
    <property type="entry name" value="DHPR"/>
    <property type="match status" value="1"/>
</dbReference>
<dbReference type="SUPFAM" id="SSF55347">
    <property type="entry name" value="Glyceraldehyde-3-phosphate dehydrogenase-like, C-terminal domain"/>
    <property type="match status" value="1"/>
</dbReference>
<dbReference type="SUPFAM" id="SSF51735">
    <property type="entry name" value="NAD(P)-binding Rossmann-fold domains"/>
    <property type="match status" value="1"/>
</dbReference>
<dbReference type="PROSITE" id="PS01298">
    <property type="entry name" value="DAPB"/>
    <property type="match status" value="1"/>
</dbReference>
<accession>Q8Y5Z6</accession>
<gene>
    <name evidence="1" type="primary">dapB</name>
    <name type="ordered locus">lmo1907</name>
</gene>